<accession>Q3AAN4</accession>
<feature type="chain" id="PRO_1000023550" description="Arginine repressor">
    <location>
        <begin position="1"/>
        <end position="150"/>
    </location>
</feature>
<protein>
    <recommendedName>
        <fullName evidence="1">Arginine repressor</fullName>
    </recommendedName>
</protein>
<gene>
    <name evidence="1" type="primary">argR</name>
    <name type="ordered locus">CHY_1981</name>
</gene>
<dbReference type="EMBL" id="CP000141">
    <property type="protein sequence ID" value="ABB15734.1"/>
    <property type="molecule type" value="Genomic_DNA"/>
</dbReference>
<dbReference type="RefSeq" id="WP_011344873.1">
    <property type="nucleotide sequence ID" value="NC_007503.1"/>
</dbReference>
<dbReference type="SMR" id="Q3AAN4"/>
<dbReference type="FunCoup" id="Q3AAN4">
    <property type="interactions" value="51"/>
</dbReference>
<dbReference type="STRING" id="246194.CHY_1981"/>
<dbReference type="KEGG" id="chy:CHY_1981"/>
<dbReference type="eggNOG" id="COG1438">
    <property type="taxonomic scope" value="Bacteria"/>
</dbReference>
<dbReference type="HOGENOM" id="CLU_097103_3_0_9"/>
<dbReference type="InParanoid" id="Q3AAN4"/>
<dbReference type="OrthoDB" id="9807089at2"/>
<dbReference type="UniPathway" id="UPA00068"/>
<dbReference type="Proteomes" id="UP000002706">
    <property type="component" value="Chromosome"/>
</dbReference>
<dbReference type="GO" id="GO:0005737">
    <property type="term" value="C:cytoplasm"/>
    <property type="evidence" value="ECO:0007669"/>
    <property type="project" value="UniProtKB-SubCell"/>
</dbReference>
<dbReference type="GO" id="GO:0034618">
    <property type="term" value="F:arginine binding"/>
    <property type="evidence" value="ECO:0007669"/>
    <property type="project" value="InterPro"/>
</dbReference>
<dbReference type="GO" id="GO:0003677">
    <property type="term" value="F:DNA binding"/>
    <property type="evidence" value="ECO:0007669"/>
    <property type="project" value="UniProtKB-KW"/>
</dbReference>
<dbReference type="GO" id="GO:0003700">
    <property type="term" value="F:DNA-binding transcription factor activity"/>
    <property type="evidence" value="ECO:0007669"/>
    <property type="project" value="UniProtKB-UniRule"/>
</dbReference>
<dbReference type="GO" id="GO:0006526">
    <property type="term" value="P:L-arginine biosynthetic process"/>
    <property type="evidence" value="ECO:0007669"/>
    <property type="project" value="UniProtKB-UniPathway"/>
</dbReference>
<dbReference type="GO" id="GO:0051259">
    <property type="term" value="P:protein complex oligomerization"/>
    <property type="evidence" value="ECO:0007669"/>
    <property type="project" value="InterPro"/>
</dbReference>
<dbReference type="GO" id="GO:1900079">
    <property type="term" value="P:regulation of arginine biosynthetic process"/>
    <property type="evidence" value="ECO:0007669"/>
    <property type="project" value="UniProtKB-UniRule"/>
</dbReference>
<dbReference type="Gene3D" id="3.30.1360.40">
    <property type="match status" value="1"/>
</dbReference>
<dbReference type="Gene3D" id="1.10.10.10">
    <property type="entry name" value="Winged helix-like DNA-binding domain superfamily/Winged helix DNA-binding domain"/>
    <property type="match status" value="1"/>
</dbReference>
<dbReference type="HAMAP" id="MF_00173">
    <property type="entry name" value="Arg_repressor"/>
    <property type="match status" value="1"/>
</dbReference>
<dbReference type="InterPro" id="IPR001669">
    <property type="entry name" value="Arg_repress"/>
</dbReference>
<dbReference type="InterPro" id="IPR020899">
    <property type="entry name" value="Arg_repress_C"/>
</dbReference>
<dbReference type="InterPro" id="IPR036251">
    <property type="entry name" value="Arg_repress_C_sf"/>
</dbReference>
<dbReference type="InterPro" id="IPR020900">
    <property type="entry name" value="Arg_repress_DNA-bd"/>
</dbReference>
<dbReference type="InterPro" id="IPR036388">
    <property type="entry name" value="WH-like_DNA-bd_sf"/>
</dbReference>
<dbReference type="InterPro" id="IPR036390">
    <property type="entry name" value="WH_DNA-bd_sf"/>
</dbReference>
<dbReference type="NCBIfam" id="TIGR01529">
    <property type="entry name" value="argR_whole"/>
    <property type="match status" value="1"/>
</dbReference>
<dbReference type="PANTHER" id="PTHR34471">
    <property type="entry name" value="ARGININE REPRESSOR"/>
    <property type="match status" value="1"/>
</dbReference>
<dbReference type="PANTHER" id="PTHR34471:SF1">
    <property type="entry name" value="ARGININE REPRESSOR"/>
    <property type="match status" value="1"/>
</dbReference>
<dbReference type="Pfam" id="PF01316">
    <property type="entry name" value="Arg_repressor"/>
    <property type="match status" value="1"/>
</dbReference>
<dbReference type="Pfam" id="PF02863">
    <property type="entry name" value="Arg_repressor_C"/>
    <property type="match status" value="1"/>
</dbReference>
<dbReference type="PRINTS" id="PR01467">
    <property type="entry name" value="ARGREPRESSOR"/>
</dbReference>
<dbReference type="SUPFAM" id="SSF55252">
    <property type="entry name" value="C-terminal domain of arginine repressor"/>
    <property type="match status" value="1"/>
</dbReference>
<dbReference type="SUPFAM" id="SSF46785">
    <property type="entry name" value="Winged helix' DNA-binding domain"/>
    <property type="match status" value="1"/>
</dbReference>
<evidence type="ECO:0000255" key="1">
    <source>
        <dbReference type="HAMAP-Rule" id="MF_00173"/>
    </source>
</evidence>
<organism>
    <name type="scientific">Carboxydothermus hydrogenoformans (strain ATCC BAA-161 / DSM 6008 / Z-2901)</name>
    <dbReference type="NCBI Taxonomy" id="246194"/>
    <lineage>
        <taxon>Bacteria</taxon>
        <taxon>Bacillati</taxon>
        <taxon>Bacillota</taxon>
        <taxon>Clostridia</taxon>
        <taxon>Thermoanaerobacterales</taxon>
        <taxon>Thermoanaerobacteraceae</taxon>
        <taxon>Carboxydothermus</taxon>
    </lineage>
</organism>
<sequence length="150" mass="16744">MKIRRQKKILELVEQKVIRTQEELAEALKEAGFDVTQATVSRDIKELGLVKIPFQKDSYRYALPQKTVSAASIERLKRLFADAVSSYDQSENLIVIKTLPGAAQGVASAIDQVAFPEILGTIAGDDTILIIARDREQVPKILARFDEFLT</sequence>
<comment type="function">
    <text evidence="1">Regulates arginine biosynthesis genes.</text>
</comment>
<comment type="pathway">
    <text>Amino-acid biosynthesis; L-arginine biosynthesis [regulation].</text>
</comment>
<comment type="subcellular location">
    <subcellularLocation>
        <location evidence="1">Cytoplasm</location>
    </subcellularLocation>
</comment>
<comment type="similarity">
    <text evidence="1">Belongs to the ArgR family.</text>
</comment>
<keyword id="KW-0028">Amino-acid biosynthesis</keyword>
<keyword id="KW-0055">Arginine biosynthesis</keyword>
<keyword id="KW-0963">Cytoplasm</keyword>
<keyword id="KW-0238">DNA-binding</keyword>
<keyword id="KW-1185">Reference proteome</keyword>
<keyword id="KW-0678">Repressor</keyword>
<keyword id="KW-0804">Transcription</keyword>
<keyword id="KW-0805">Transcription regulation</keyword>
<name>ARGR_CARHZ</name>
<reference key="1">
    <citation type="journal article" date="2005" name="PLoS Genet.">
        <title>Life in hot carbon monoxide: the complete genome sequence of Carboxydothermus hydrogenoformans Z-2901.</title>
        <authorList>
            <person name="Wu M."/>
            <person name="Ren Q."/>
            <person name="Durkin A.S."/>
            <person name="Daugherty S.C."/>
            <person name="Brinkac L.M."/>
            <person name="Dodson R.J."/>
            <person name="Madupu R."/>
            <person name="Sullivan S.A."/>
            <person name="Kolonay J.F."/>
            <person name="Nelson W.C."/>
            <person name="Tallon L.J."/>
            <person name="Jones K.M."/>
            <person name="Ulrich L.E."/>
            <person name="Gonzalez J.M."/>
            <person name="Zhulin I.B."/>
            <person name="Robb F.T."/>
            <person name="Eisen J.A."/>
        </authorList>
    </citation>
    <scope>NUCLEOTIDE SEQUENCE [LARGE SCALE GENOMIC DNA]</scope>
    <source>
        <strain>ATCC BAA-161 / DSM 6008 / Z-2901</strain>
    </source>
</reference>
<proteinExistence type="inferred from homology"/>